<comment type="function">
    <text evidence="1">Nucleotide-binding protein.</text>
</comment>
<comment type="similarity">
    <text evidence="1">Belongs to the YajQ family.</text>
</comment>
<protein>
    <recommendedName>
        <fullName evidence="1">Nucleotide-binding protein BTH_I0730</fullName>
    </recommendedName>
</protein>
<gene>
    <name type="ordered locus">BTH_I0730</name>
</gene>
<reference key="1">
    <citation type="journal article" date="2005" name="BMC Genomics">
        <title>Bacterial genome adaptation to niches: divergence of the potential virulence genes in three Burkholderia species of different survival strategies.</title>
        <authorList>
            <person name="Kim H.S."/>
            <person name="Schell M.A."/>
            <person name="Yu Y."/>
            <person name="Ulrich R.L."/>
            <person name="Sarria S.H."/>
            <person name="Nierman W.C."/>
            <person name="DeShazer D."/>
        </authorList>
    </citation>
    <scope>NUCLEOTIDE SEQUENCE [LARGE SCALE GENOMIC DNA]</scope>
    <source>
        <strain>ATCC 700388 / DSM 13276 / CCUG 48851 / CIP 106301 / E264</strain>
    </source>
</reference>
<keyword id="KW-0547">Nucleotide-binding</keyword>
<organism>
    <name type="scientific">Burkholderia thailandensis (strain ATCC 700388 / DSM 13276 / CCUG 48851 / CIP 106301 / E264)</name>
    <dbReference type="NCBI Taxonomy" id="271848"/>
    <lineage>
        <taxon>Bacteria</taxon>
        <taxon>Pseudomonadati</taxon>
        <taxon>Pseudomonadota</taxon>
        <taxon>Betaproteobacteria</taxon>
        <taxon>Burkholderiales</taxon>
        <taxon>Burkholderiaceae</taxon>
        <taxon>Burkholderia</taxon>
        <taxon>pseudomallei group</taxon>
    </lineage>
</organism>
<proteinExistence type="inferred from homology"/>
<evidence type="ECO:0000255" key="1">
    <source>
        <dbReference type="HAMAP-Rule" id="MF_00632"/>
    </source>
</evidence>
<feature type="chain" id="PRO_0000261926" description="Nucleotide-binding protein BTH_I0730">
    <location>
        <begin position="1"/>
        <end position="161"/>
    </location>
</feature>
<sequence>MPSFDVVSEANMIEVKNAVEQSNKEISTRFDFKGSDARVEQKERELTLYADDDFKLGQVKDVLIGKLAKRNVDVRFLDYGKIEKIGGDKVKQVATIKKGVSGDLAKKVVRIVKDSKIKVQASIQGDAVRVSGAKRDDLQSVIALLRKEVTDTPLDFNNFRD</sequence>
<dbReference type="EMBL" id="CP000086">
    <property type="protein sequence ID" value="ABC36730.1"/>
    <property type="molecule type" value="Genomic_DNA"/>
</dbReference>
<dbReference type="RefSeq" id="WP_009892673.1">
    <property type="nucleotide sequence ID" value="NZ_CP008785.1"/>
</dbReference>
<dbReference type="SMR" id="Q2T0L3"/>
<dbReference type="GeneID" id="45120487"/>
<dbReference type="KEGG" id="bte:BTH_I0730"/>
<dbReference type="HOGENOM" id="CLU_099839_1_0_4"/>
<dbReference type="Proteomes" id="UP000001930">
    <property type="component" value="Chromosome I"/>
</dbReference>
<dbReference type="GO" id="GO:0005829">
    <property type="term" value="C:cytosol"/>
    <property type="evidence" value="ECO:0007669"/>
    <property type="project" value="TreeGrafter"/>
</dbReference>
<dbReference type="GO" id="GO:0000166">
    <property type="term" value="F:nucleotide binding"/>
    <property type="evidence" value="ECO:0007669"/>
    <property type="project" value="TreeGrafter"/>
</dbReference>
<dbReference type="CDD" id="cd11740">
    <property type="entry name" value="YajQ_like"/>
    <property type="match status" value="1"/>
</dbReference>
<dbReference type="Gene3D" id="3.30.70.860">
    <property type="match status" value="1"/>
</dbReference>
<dbReference type="Gene3D" id="3.30.70.990">
    <property type="entry name" value="YajQ-like, domain 2"/>
    <property type="match status" value="1"/>
</dbReference>
<dbReference type="HAMAP" id="MF_00632">
    <property type="entry name" value="YajQ"/>
    <property type="match status" value="1"/>
</dbReference>
<dbReference type="InterPro" id="IPR007551">
    <property type="entry name" value="DUF520"/>
</dbReference>
<dbReference type="InterPro" id="IPR035571">
    <property type="entry name" value="UPF0234-like_C"/>
</dbReference>
<dbReference type="InterPro" id="IPR035570">
    <property type="entry name" value="UPF0234_N"/>
</dbReference>
<dbReference type="InterPro" id="IPR036183">
    <property type="entry name" value="YajQ-like_sf"/>
</dbReference>
<dbReference type="NCBIfam" id="NF003819">
    <property type="entry name" value="PRK05412.1"/>
    <property type="match status" value="1"/>
</dbReference>
<dbReference type="PANTHER" id="PTHR30476">
    <property type="entry name" value="UPF0234 PROTEIN YAJQ"/>
    <property type="match status" value="1"/>
</dbReference>
<dbReference type="PANTHER" id="PTHR30476:SF0">
    <property type="entry name" value="UPF0234 PROTEIN YAJQ"/>
    <property type="match status" value="1"/>
</dbReference>
<dbReference type="Pfam" id="PF04461">
    <property type="entry name" value="DUF520"/>
    <property type="match status" value="1"/>
</dbReference>
<dbReference type="SUPFAM" id="SSF89963">
    <property type="entry name" value="YajQ-like"/>
    <property type="match status" value="2"/>
</dbReference>
<accession>Q2T0L3</accession>
<name>Y730_BURTA</name>